<reference key="1">
    <citation type="submission" date="2007-11" db="EMBL/GenBank/DDBJ databases">
        <title>Complete genome sequence of Clostridium phytofermentans ISDg.</title>
        <authorList>
            <person name="Leschine S.B."/>
            <person name="Warnick T.A."/>
            <person name="Blanchard J.L."/>
            <person name="Schnell D.J."/>
            <person name="Petit E.L."/>
            <person name="LaTouf W.G."/>
            <person name="Copeland A."/>
            <person name="Lucas S."/>
            <person name="Lapidus A."/>
            <person name="Barry K."/>
            <person name="Glavina del Rio T."/>
            <person name="Dalin E."/>
            <person name="Tice H."/>
            <person name="Pitluck S."/>
            <person name="Kiss H."/>
            <person name="Brettin T."/>
            <person name="Bruce D."/>
            <person name="Detter J.C."/>
            <person name="Han C."/>
            <person name="Kuske C."/>
            <person name="Schmutz J."/>
            <person name="Larimer F."/>
            <person name="Land M."/>
            <person name="Hauser L."/>
            <person name="Kyrpides N."/>
            <person name="Kim E.A."/>
            <person name="Richardson P."/>
        </authorList>
    </citation>
    <scope>NUCLEOTIDE SEQUENCE [LARGE SCALE GENOMIC DNA]</scope>
    <source>
        <strain>ATCC 700394 / DSM 18823 / ISDg</strain>
    </source>
</reference>
<protein>
    <recommendedName>
        <fullName evidence="1">Small ribosomal subunit protein uS11</fullName>
    </recommendedName>
    <alternativeName>
        <fullName evidence="2">30S ribosomal protein S11</fullName>
    </alternativeName>
</protein>
<gene>
    <name evidence="1" type="primary">rpsK</name>
    <name type="ordered locus">Cphy_3641</name>
</gene>
<dbReference type="EMBL" id="CP000885">
    <property type="protein sequence ID" value="ABX43988.1"/>
    <property type="molecule type" value="Genomic_DNA"/>
</dbReference>
<dbReference type="RefSeq" id="WP_012201636.1">
    <property type="nucleotide sequence ID" value="NC_010001.1"/>
</dbReference>
<dbReference type="SMR" id="A9KJG8"/>
<dbReference type="STRING" id="357809.Cphy_3641"/>
<dbReference type="KEGG" id="cpy:Cphy_3641"/>
<dbReference type="eggNOG" id="COG0100">
    <property type="taxonomic scope" value="Bacteria"/>
</dbReference>
<dbReference type="HOGENOM" id="CLU_072439_5_0_9"/>
<dbReference type="OrthoDB" id="9806415at2"/>
<dbReference type="Proteomes" id="UP000000370">
    <property type="component" value="Chromosome"/>
</dbReference>
<dbReference type="GO" id="GO:1990904">
    <property type="term" value="C:ribonucleoprotein complex"/>
    <property type="evidence" value="ECO:0007669"/>
    <property type="project" value="UniProtKB-KW"/>
</dbReference>
<dbReference type="GO" id="GO:0005840">
    <property type="term" value="C:ribosome"/>
    <property type="evidence" value="ECO:0007669"/>
    <property type="project" value="UniProtKB-KW"/>
</dbReference>
<dbReference type="GO" id="GO:0019843">
    <property type="term" value="F:rRNA binding"/>
    <property type="evidence" value="ECO:0007669"/>
    <property type="project" value="UniProtKB-UniRule"/>
</dbReference>
<dbReference type="GO" id="GO:0003735">
    <property type="term" value="F:structural constituent of ribosome"/>
    <property type="evidence" value="ECO:0007669"/>
    <property type="project" value="InterPro"/>
</dbReference>
<dbReference type="GO" id="GO:0006412">
    <property type="term" value="P:translation"/>
    <property type="evidence" value="ECO:0007669"/>
    <property type="project" value="UniProtKB-UniRule"/>
</dbReference>
<dbReference type="FunFam" id="3.30.420.80:FF:000001">
    <property type="entry name" value="30S ribosomal protein S11"/>
    <property type="match status" value="1"/>
</dbReference>
<dbReference type="Gene3D" id="3.30.420.80">
    <property type="entry name" value="Ribosomal protein S11"/>
    <property type="match status" value="1"/>
</dbReference>
<dbReference type="HAMAP" id="MF_01310">
    <property type="entry name" value="Ribosomal_uS11"/>
    <property type="match status" value="1"/>
</dbReference>
<dbReference type="InterPro" id="IPR001971">
    <property type="entry name" value="Ribosomal_uS11"/>
</dbReference>
<dbReference type="InterPro" id="IPR019981">
    <property type="entry name" value="Ribosomal_uS11_bac-type"/>
</dbReference>
<dbReference type="InterPro" id="IPR018102">
    <property type="entry name" value="Ribosomal_uS11_CS"/>
</dbReference>
<dbReference type="InterPro" id="IPR036967">
    <property type="entry name" value="Ribosomal_uS11_sf"/>
</dbReference>
<dbReference type="NCBIfam" id="NF003698">
    <property type="entry name" value="PRK05309.1"/>
    <property type="match status" value="1"/>
</dbReference>
<dbReference type="NCBIfam" id="TIGR03632">
    <property type="entry name" value="uS11_bact"/>
    <property type="match status" value="1"/>
</dbReference>
<dbReference type="PANTHER" id="PTHR11759">
    <property type="entry name" value="40S RIBOSOMAL PROTEIN S14/30S RIBOSOMAL PROTEIN S11"/>
    <property type="match status" value="1"/>
</dbReference>
<dbReference type="Pfam" id="PF00411">
    <property type="entry name" value="Ribosomal_S11"/>
    <property type="match status" value="1"/>
</dbReference>
<dbReference type="PIRSF" id="PIRSF002131">
    <property type="entry name" value="Ribosomal_S11"/>
    <property type="match status" value="1"/>
</dbReference>
<dbReference type="SUPFAM" id="SSF53137">
    <property type="entry name" value="Translational machinery components"/>
    <property type="match status" value="1"/>
</dbReference>
<dbReference type="PROSITE" id="PS00054">
    <property type="entry name" value="RIBOSOMAL_S11"/>
    <property type="match status" value="1"/>
</dbReference>
<sequence length="132" mass="13946">MAKKIAAKKVTKKRVKKNVDRGQAHIQSSFNNTIVTLTDAEGNALSWASAGGLGFRGSRKSTPYAAQMAAETAAKAALVHGLKTVEVMVKGPGSGREAAIRALQACGIEVTSIKDVTPVPHNGCRPPKRRRV</sequence>
<feature type="chain" id="PRO_1000141074" description="Small ribosomal subunit protein uS11">
    <location>
        <begin position="1"/>
        <end position="132"/>
    </location>
</feature>
<organism>
    <name type="scientific">Lachnoclostridium phytofermentans (strain ATCC 700394 / DSM 18823 / ISDg)</name>
    <name type="common">Clostridium phytofermentans</name>
    <dbReference type="NCBI Taxonomy" id="357809"/>
    <lineage>
        <taxon>Bacteria</taxon>
        <taxon>Bacillati</taxon>
        <taxon>Bacillota</taxon>
        <taxon>Clostridia</taxon>
        <taxon>Lachnospirales</taxon>
        <taxon>Lachnospiraceae</taxon>
    </lineage>
</organism>
<evidence type="ECO:0000255" key="1">
    <source>
        <dbReference type="HAMAP-Rule" id="MF_01310"/>
    </source>
</evidence>
<evidence type="ECO:0000305" key="2"/>
<name>RS11_LACP7</name>
<comment type="function">
    <text evidence="1">Located on the platform of the 30S subunit, it bridges several disparate RNA helices of the 16S rRNA. Forms part of the Shine-Dalgarno cleft in the 70S ribosome.</text>
</comment>
<comment type="subunit">
    <text evidence="1">Part of the 30S ribosomal subunit. Interacts with proteins S7 and S18. Binds to IF-3.</text>
</comment>
<comment type="similarity">
    <text evidence="1">Belongs to the universal ribosomal protein uS11 family.</text>
</comment>
<keyword id="KW-1185">Reference proteome</keyword>
<keyword id="KW-0687">Ribonucleoprotein</keyword>
<keyword id="KW-0689">Ribosomal protein</keyword>
<keyword id="KW-0694">RNA-binding</keyword>
<keyword id="KW-0699">rRNA-binding</keyword>
<accession>A9KJG8</accession>
<proteinExistence type="inferred from homology"/>